<gene>
    <name type="primary">Vmo1</name>
    <name type="synonym">Gm741</name>
</gene>
<feature type="signal peptide" evidence="2">
    <location>
        <begin position="1"/>
        <end position="21"/>
    </location>
</feature>
<feature type="chain" id="PRO_0000036408" description="Vitelline membrane outer layer protein 1 homolog">
    <location>
        <begin position="22"/>
        <end position="201"/>
    </location>
</feature>
<feature type="disulfide bond" evidence="1">
    <location>
        <begin position="52"/>
        <end position="85"/>
    </location>
</feature>
<feature type="disulfide bond" evidence="1">
    <location>
        <begin position="113"/>
        <end position="145"/>
    </location>
</feature>
<feature type="disulfide bond" evidence="1">
    <location>
        <begin position="168"/>
        <end position="198"/>
    </location>
</feature>
<feature type="disulfide bond" evidence="1">
    <location>
        <begin position="173"/>
        <end position="199"/>
    </location>
</feature>
<reference key="1">
    <citation type="journal article" date="2009" name="PLoS Biol.">
        <title>Lineage-specific biology revealed by a finished genome assembly of the mouse.</title>
        <authorList>
            <person name="Church D.M."/>
            <person name="Goodstadt L."/>
            <person name="Hillier L.W."/>
            <person name="Zody M.C."/>
            <person name="Goldstein S."/>
            <person name="She X."/>
            <person name="Bult C.J."/>
            <person name="Agarwala R."/>
            <person name="Cherry J.L."/>
            <person name="DiCuccio M."/>
            <person name="Hlavina W."/>
            <person name="Kapustin Y."/>
            <person name="Meric P."/>
            <person name="Maglott D."/>
            <person name="Birtle Z."/>
            <person name="Marques A.C."/>
            <person name="Graves T."/>
            <person name="Zhou S."/>
            <person name="Teague B."/>
            <person name="Potamousis K."/>
            <person name="Churas C."/>
            <person name="Place M."/>
            <person name="Herschleb J."/>
            <person name="Runnheim R."/>
            <person name="Forrest D."/>
            <person name="Amos-Landgraf J."/>
            <person name="Schwartz D.C."/>
            <person name="Cheng Z."/>
            <person name="Lindblad-Toh K."/>
            <person name="Eichler E.E."/>
            <person name="Ponting C.P."/>
        </authorList>
    </citation>
    <scope>NUCLEOTIDE SEQUENCE [LARGE SCALE GENOMIC DNA]</scope>
    <source>
        <strain>C57BL/6J</strain>
    </source>
</reference>
<protein>
    <recommendedName>
        <fullName>Vitelline membrane outer layer protein 1 homolog</fullName>
    </recommendedName>
</protein>
<organism>
    <name type="scientific">Mus musculus</name>
    <name type="common">Mouse</name>
    <dbReference type="NCBI Taxonomy" id="10090"/>
    <lineage>
        <taxon>Eukaryota</taxon>
        <taxon>Metazoa</taxon>
        <taxon>Chordata</taxon>
        <taxon>Craniata</taxon>
        <taxon>Vertebrata</taxon>
        <taxon>Euteleostomi</taxon>
        <taxon>Mammalia</taxon>
        <taxon>Eutheria</taxon>
        <taxon>Euarchontoglires</taxon>
        <taxon>Glires</taxon>
        <taxon>Rodentia</taxon>
        <taxon>Myomorpha</taxon>
        <taxon>Muroidea</taxon>
        <taxon>Muridae</taxon>
        <taxon>Murinae</taxon>
        <taxon>Mus</taxon>
        <taxon>Mus</taxon>
    </lineage>
</organism>
<proteinExistence type="inferred from homology"/>
<keyword id="KW-1015">Disulfide bond</keyword>
<keyword id="KW-1185">Reference proteome</keyword>
<keyword id="KW-0964">Secreted</keyword>
<keyword id="KW-0732">Signal</keyword>
<evidence type="ECO:0000250" key="1"/>
<evidence type="ECO:0000255" key="2"/>
<evidence type="ECO:0000305" key="3"/>
<name>VMO1_MOUSE</name>
<sequence length="201" mass="21957">MELQAGARLLLLLGVMCYGHAQIQVHVEPRYASIVDVTNGGTWGDWAWPEMCPDGYFASGFSVKVEPPQGIPGDDTALNGIRLHCTRGNSQKNTHVVESQSGSWGSWSEPLWCPGTSFLVAFCLRVEPFTFPGDNTGVNNVRFRCSDGVELEGPGLNWGDYGEWSNSCPKGVCGLQTKIQKPRGLRDDTALNDIRIFCCAS</sequence>
<comment type="subcellular location">
    <subcellularLocation>
        <location evidence="1">Secreted</location>
    </subcellularLocation>
</comment>
<comment type="similarity">
    <text evidence="3">Belongs to the VMO1 family.</text>
</comment>
<dbReference type="EMBL" id="AL592547">
    <property type="status" value="NOT_ANNOTATED_CDS"/>
    <property type="molecule type" value="Genomic_DNA"/>
</dbReference>
<dbReference type="EMBL" id="CR933736">
    <property type="status" value="NOT_ANNOTATED_CDS"/>
    <property type="molecule type" value="Genomic_DNA"/>
</dbReference>
<dbReference type="CCDS" id="CCDS24951.1"/>
<dbReference type="RefSeq" id="NP_001013625.1">
    <property type="nucleotide sequence ID" value="NM_001013607.1"/>
</dbReference>
<dbReference type="SMR" id="Q5SXG7"/>
<dbReference type="FunCoup" id="Q5SXG7">
    <property type="interactions" value="433"/>
</dbReference>
<dbReference type="STRING" id="10090.ENSMUSP00000021179"/>
<dbReference type="PhosphoSitePlus" id="Q5SXG7"/>
<dbReference type="PaxDb" id="10090-ENSMUSP00000021179"/>
<dbReference type="ProteomicsDB" id="275179"/>
<dbReference type="Antibodypedia" id="51551">
    <property type="antibodies" value="68 antibodies from 16 providers"/>
</dbReference>
<dbReference type="DNASU" id="327956"/>
<dbReference type="Ensembl" id="ENSMUST00000021179.4">
    <property type="protein sequence ID" value="ENSMUSP00000021179.4"/>
    <property type="gene ID" value="ENSMUSG00000020830.4"/>
</dbReference>
<dbReference type="GeneID" id="327956"/>
<dbReference type="KEGG" id="mmu:327956"/>
<dbReference type="UCSC" id="uc007jvc.1">
    <property type="organism name" value="mouse"/>
</dbReference>
<dbReference type="AGR" id="MGI:2685587"/>
<dbReference type="CTD" id="284013"/>
<dbReference type="MGI" id="MGI:2685587">
    <property type="gene designation" value="Vmo1"/>
</dbReference>
<dbReference type="VEuPathDB" id="HostDB:ENSMUSG00000020830"/>
<dbReference type="eggNOG" id="ENOG502S24T">
    <property type="taxonomic scope" value="Eukaryota"/>
</dbReference>
<dbReference type="GeneTree" id="ENSGT00390000009313"/>
<dbReference type="HOGENOM" id="CLU_111176_1_0_1"/>
<dbReference type="InParanoid" id="Q5SXG7"/>
<dbReference type="OMA" id="IRLHCTR"/>
<dbReference type="OrthoDB" id="6344411at2759"/>
<dbReference type="PhylomeDB" id="Q5SXG7"/>
<dbReference type="TreeFam" id="TF315374"/>
<dbReference type="BioGRID-ORCS" id="327956">
    <property type="hits" value="2 hits in 77 CRISPR screens"/>
</dbReference>
<dbReference type="PRO" id="PR:Q5SXG7"/>
<dbReference type="Proteomes" id="UP000000589">
    <property type="component" value="Chromosome 11"/>
</dbReference>
<dbReference type="RNAct" id="Q5SXG7">
    <property type="molecule type" value="protein"/>
</dbReference>
<dbReference type="Bgee" id="ENSMUSG00000020830">
    <property type="expression patterns" value="Expressed in mesodermal cell in embryo and 27 other cell types or tissues"/>
</dbReference>
<dbReference type="GO" id="GO:0005576">
    <property type="term" value="C:extracellular region"/>
    <property type="evidence" value="ECO:0007669"/>
    <property type="project" value="UniProtKB-SubCell"/>
</dbReference>
<dbReference type="CDD" id="cd00220">
    <property type="entry name" value="VMO-I"/>
    <property type="match status" value="1"/>
</dbReference>
<dbReference type="FunFam" id="2.100.10.20:FF:000001">
    <property type="entry name" value="Vitelline membrane outer layer 1 homolog"/>
    <property type="match status" value="1"/>
</dbReference>
<dbReference type="Gene3D" id="2.100.10.20">
    <property type="entry name" value="Vitelline membrane outer layer protein I (VOMI)"/>
    <property type="match status" value="1"/>
</dbReference>
<dbReference type="InterPro" id="IPR005515">
    <property type="entry name" value="VOMI"/>
</dbReference>
<dbReference type="InterPro" id="IPR036706">
    <property type="entry name" value="VOMI_sf"/>
</dbReference>
<dbReference type="PANTHER" id="PTHR18841:SF2">
    <property type="entry name" value="VITELLINE MEMBRANE OUTER LAYER PROTEIN 1 HOMOLOG"/>
    <property type="match status" value="1"/>
</dbReference>
<dbReference type="PANTHER" id="PTHR18841">
    <property type="entry name" value="VITELLINE MEMBRANE OUTER LAYER PROTEIN I-RELATED"/>
    <property type="match status" value="1"/>
</dbReference>
<dbReference type="Pfam" id="PF03762">
    <property type="entry name" value="VOMI"/>
    <property type="match status" value="1"/>
</dbReference>
<dbReference type="SUPFAM" id="SSF51092">
    <property type="entry name" value="Vitelline membrane outer protein-I (VMO-I)"/>
    <property type="match status" value="1"/>
</dbReference>
<accession>Q5SXG7</accession>
<accession>A2CFA5</accession>